<evidence type="ECO:0000305" key="1"/>
<accession>Q49757</accession>
<feature type="chain" id="PRO_0000104049" description="Uncharacterized protein ML0607">
    <location>
        <begin position="1"/>
        <end position="279"/>
    </location>
</feature>
<sequence>MWRMRVVHSTGYVYESPATASFNEARLTPRSNTRQTVILNRVETIPATRSYRYIDYWGTVVTAFDLRAPHTELTVTSSSVVETESLEPSVSRITWTELQSMAVIDRFDEVLQPTAYTPVNTRVAAVGKRIAKNHEPRKAVVAAARWARSKLDYIPGTTGVHSSGLDALHQCRGVCQDFAHLTLIVLRSMGIPGRYVSGYLHPKRDAVVGKTVEGRSHAWIQAWTGGWWNYDPTNDVEITEQYISVGVGRDYTDVAPLKGIYSGRGATDLDVVVEITRLA</sequence>
<gene>
    <name type="ordered locus">ML0607</name>
    <name type="ORF">B1937_F2_39</name>
    <name type="ORF">MLCL536.03c</name>
</gene>
<protein>
    <recommendedName>
        <fullName>Uncharacterized protein ML0607</fullName>
    </recommendedName>
</protein>
<comment type="similarity">
    <text evidence="1">To M.tuberculosis Rv2569c.</text>
</comment>
<organism>
    <name type="scientific">Mycobacterium leprae (strain TN)</name>
    <dbReference type="NCBI Taxonomy" id="272631"/>
    <lineage>
        <taxon>Bacteria</taxon>
        <taxon>Bacillati</taxon>
        <taxon>Actinomycetota</taxon>
        <taxon>Actinomycetes</taxon>
        <taxon>Mycobacteriales</taxon>
        <taxon>Mycobacteriaceae</taxon>
        <taxon>Mycobacterium</taxon>
    </lineage>
</organism>
<reference key="1">
    <citation type="submission" date="1994-03" db="EMBL/GenBank/DDBJ databases">
        <authorList>
            <person name="Smith D.R."/>
            <person name="Robison K."/>
        </authorList>
    </citation>
    <scope>NUCLEOTIDE SEQUENCE [GENOMIC DNA]</scope>
</reference>
<reference key="2">
    <citation type="journal article" date="2001" name="Nature">
        <title>Massive gene decay in the leprosy bacillus.</title>
        <authorList>
            <person name="Cole S.T."/>
            <person name="Eiglmeier K."/>
            <person name="Parkhill J."/>
            <person name="James K.D."/>
            <person name="Thomson N.R."/>
            <person name="Wheeler P.R."/>
            <person name="Honore N."/>
            <person name="Garnier T."/>
            <person name="Churcher C.M."/>
            <person name="Harris D.E."/>
            <person name="Mungall K.L."/>
            <person name="Basham D."/>
            <person name="Brown D."/>
            <person name="Chillingworth T."/>
            <person name="Connor R."/>
            <person name="Davies R.M."/>
            <person name="Devlin K."/>
            <person name="Duthoy S."/>
            <person name="Feltwell T."/>
            <person name="Fraser A."/>
            <person name="Hamlin N."/>
            <person name="Holroyd S."/>
            <person name="Hornsby T."/>
            <person name="Jagels K."/>
            <person name="Lacroix C."/>
            <person name="Maclean J."/>
            <person name="Moule S."/>
            <person name="Murphy L.D."/>
            <person name="Oliver K."/>
            <person name="Quail M.A."/>
            <person name="Rajandream M.A."/>
            <person name="Rutherford K.M."/>
            <person name="Rutter S."/>
            <person name="Seeger K."/>
            <person name="Simon S."/>
            <person name="Simmonds M."/>
            <person name="Skelton J."/>
            <person name="Squares R."/>
            <person name="Squares S."/>
            <person name="Stevens K."/>
            <person name="Taylor K."/>
            <person name="Whitehead S."/>
            <person name="Woodward J.R."/>
            <person name="Barrell B.G."/>
        </authorList>
    </citation>
    <scope>NUCLEOTIDE SEQUENCE [LARGE SCALE GENOMIC DNA]</scope>
    <source>
        <strain>TN</strain>
    </source>
</reference>
<name>Y607_MYCLE</name>
<proteinExistence type="predicted"/>
<keyword id="KW-1185">Reference proteome</keyword>
<dbReference type="EMBL" id="U00016">
    <property type="protein sequence ID" value="AAA17162.1"/>
    <property type="molecule type" value="Genomic_DNA"/>
</dbReference>
<dbReference type="EMBL" id="Z99125">
    <property type="protein sequence ID" value="CAB16146.1"/>
    <property type="molecule type" value="Genomic_DNA"/>
</dbReference>
<dbReference type="EMBL" id="AL583919">
    <property type="protein sequence ID" value="CAC30115.1"/>
    <property type="molecule type" value="Genomic_DNA"/>
</dbReference>
<dbReference type="PIR" id="S72594">
    <property type="entry name" value="S72594"/>
</dbReference>
<dbReference type="RefSeq" id="NP_301512.1">
    <property type="nucleotide sequence ID" value="NC_002677.1"/>
</dbReference>
<dbReference type="RefSeq" id="WP_010907836.1">
    <property type="nucleotide sequence ID" value="NC_002677.1"/>
</dbReference>
<dbReference type="SMR" id="Q49757"/>
<dbReference type="STRING" id="272631.gene:17574428"/>
<dbReference type="KEGG" id="mle:ML0607"/>
<dbReference type="PATRIC" id="fig|272631.5.peg.1065"/>
<dbReference type="Leproma" id="ML0607"/>
<dbReference type="eggNOG" id="COG1305">
    <property type="taxonomic scope" value="Bacteria"/>
</dbReference>
<dbReference type="HOGENOM" id="CLU_008973_1_0_11"/>
<dbReference type="OrthoDB" id="9804023at2"/>
<dbReference type="Proteomes" id="UP000000806">
    <property type="component" value="Chromosome"/>
</dbReference>
<dbReference type="Gene3D" id="3.10.620.30">
    <property type="match status" value="1"/>
</dbReference>
<dbReference type="InterPro" id="IPR013589">
    <property type="entry name" value="Bac_transglu_N"/>
</dbReference>
<dbReference type="InterPro" id="IPR038765">
    <property type="entry name" value="Papain-like_cys_pep_sf"/>
</dbReference>
<dbReference type="InterPro" id="IPR002931">
    <property type="entry name" value="Transglutaminase-like"/>
</dbReference>
<dbReference type="PANTHER" id="PTHR33490">
    <property type="entry name" value="BLR5614 PROTEIN-RELATED"/>
    <property type="match status" value="1"/>
</dbReference>
<dbReference type="PANTHER" id="PTHR33490:SF6">
    <property type="entry name" value="SLL1049 PROTEIN"/>
    <property type="match status" value="1"/>
</dbReference>
<dbReference type="Pfam" id="PF08379">
    <property type="entry name" value="Bact_transglu_N"/>
    <property type="match status" value="1"/>
</dbReference>
<dbReference type="Pfam" id="PF01841">
    <property type="entry name" value="Transglut_core"/>
    <property type="match status" value="1"/>
</dbReference>
<dbReference type="SMART" id="SM00460">
    <property type="entry name" value="TGc"/>
    <property type="match status" value="1"/>
</dbReference>
<dbReference type="SUPFAM" id="SSF54001">
    <property type="entry name" value="Cysteine proteinases"/>
    <property type="match status" value="1"/>
</dbReference>